<geneLocation type="mitochondrion"/>
<accession>Q7IZ08</accession>
<reference key="1">
    <citation type="journal article" date="2000" name="J. Mammal. Evol.">
        <title>Molecular phylogeny of the chipmunk genus Tamias based on the mitochondrial cytochrome oxidase subunit II gene.</title>
        <authorList>
            <person name="Piaggio A.J."/>
            <person name="Spicer G.S."/>
        </authorList>
    </citation>
    <scope>NUCLEOTIDE SEQUENCE [GENOMIC DNA]</scope>
</reference>
<sequence>MAYPFELGFQDATSPIMEELLHFHDHTLMIVFLISSLVLYIISLMLTTKLTHTSTMDAQEVETIWTILPAIILILIALPSLRILYMMDEINDPSLTVKTMGHQWYWSYEYTDYEDLNFDSYMIPTSDLNPGELRLLEVDNRVVLPMELPIRMLISSEDVLHSWAVPSLGLKTDAIPGRLNQATLTSTRPGLYYGQCSEICGSNHSFMPIVLELVPLKHFENWSSSML</sequence>
<keyword id="KW-0186">Copper</keyword>
<keyword id="KW-0249">Electron transport</keyword>
<keyword id="KW-0460">Magnesium</keyword>
<keyword id="KW-0472">Membrane</keyword>
<keyword id="KW-0479">Metal-binding</keyword>
<keyword id="KW-0496">Mitochondrion</keyword>
<keyword id="KW-0999">Mitochondrion inner membrane</keyword>
<keyword id="KW-0679">Respiratory chain</keyword>
<keyword id="KW-1278">Translocase</keyword>
<keyword id="KW-0812">Transmembrane</keyword>
<keyword id="KW-1133">Transmembrane helix</keyword>
<keyword id="KW-0813">Transport</keyword>
<proteinExistence type="inferred from homology"/>
<name>COX2_TAMMR</name>
<dbReference type="EC" id="7.1.1.9"/>
<dbReference type="EMBL" id="AF147598">
    <property type="protein sequence ID" value="AAG42591.1"/>
    <property type="molecule type" value="Genomic_DNA"/>
</dbReference>
<dbReference type="SMR" id="Q7IZ08"/>
<dbReference type="GO" id="GO:0005743">
    <property type="term" value="C:mitochondrial inner membrane"/>
    <property type="evidence" value="ECO:0007669"/>
    <property type="project" value="UniProtKB-SubCell"/>
</dbReference>
<dbReference type="GO" id="GO:0045277">
    <property type="term" value="C:respiratory chain complex IV"/>
    <property type="evidence" value="ECO:0000250"/>
    <property type="project" value="UniProtKB"/>
</dbReference>
<dbReference type="GO" id="GO:0005507">
    <property type="term" value="F:copper ion binding"/>
    <property type="evidence" value="ECO:0007669"/>
    <property type="project" value="InterPro"/>
</dbReference>
<dbReference type="GO" id="GO:0004129">
    <property type="term" value="F:cytochrome-c oxidase activity"/>
    <property type="evidence" value="ECO:0007669"/>
    <property type="project" value="UniProtKB-EC"/>
</dbReference>
<dbReference type="GO" id="GO:0042773">
    <property type="term" value="P:ATP synthesis coupled electron transport"/>
    <property type="evidence" value="ECO:0007669"/>
    <property type="project" value="TreeGrafter"/>
</dbReference>
<dbReference type="CDD" id="cd13912">
    <property type="entry name" value="CcO_II_C"/>
    <property type="match status" value="1"/>
</dbReference>
<dbReference type="FunFam" id="1.10.287.90:FF:000001">
    <property type="entry name" value="Cytochrome c oxidase subunit 2"/>
    <property type="match status" value="1"/>
</dbReference>
<dbReference type="FunFam" id="2.60.40.420:FF:000001">
    <property type="entry name" value="Cytochrome c oxidase subunit 2"/>
    <property type="match status" value="1"/>
</dbReference>
<dbReference type="Gene3D" id="1.10.287.90">
    <property type="match status" value="1"/>
</dbReference>
<dbReference type="Gene3D" id="2.60.40.420">
    <property type="entry name" value="Cupredoxins - blue copper proteins"/>
    <property type="match status" value="1"/>
</dbReference>
<dbReference type="InterPro" id="IPR045187">
    <property type="entry name" value="CcO_II"/>
</dbReference>
<dbReference type="InterPro" id="IPR002429">
    <property type="entry name" value="CcO_II-like_C"/>
</dbReference>
<dbReference type="InterPro" id="IPR034210">
    <property type="entry name" value="CcO_II_C"/>
</dbReference>
<dbReference type="InterPro" id="IPR001505">
    <property type="entry name" value="Copper_CuA"/>
</dbReference>
<dbReference type="InterPro" id="IPR008972">
    <property type="entry name" value="Cupredoxin"/>
</dbReference>
<dbReference type="InterPro" id="IPR014222">
    <property type="entry name" value="Cyt_c_oxidase_su2"/>
</dbReference>
<dbReference type="InterPro" id="IPR011759">
    <property type="entry name" value="Cyt_c_oxidase_su2_TM_dom"/>
</dbReference>
<dbReference type="InterPro" id="IPR036257">
    <property type="entry name" value="Cyt_c_oxidase_su2_TM_sf"/>
</dbReference>
<dbReference type="NCBIfam" id="TIGR02866">
    <property type="entry name" value="CoxB"/>
    <property type="match status" value="1"/>
</dbReference>
<dbReference type="PANTHER" id="PTHR22888:SF9">
    <property type="entry name" value="CYTOCHROME C OXIDASE SUBUNIT 2"/>
    <property type="match status" value="1"/>
</dbReference>
<dbReference type="PANTHER" id="PTHR22888">
    <property type="entry name" value="CYTOCHROME C OXIDASE, SUBUNIT II"/>
    <property type="match status" value="1"/>
</dbReference>
<dbReference type="Pfam" id="PF00116">
    <property type="entry name" value="COX2"/>
    <property type="match status" value="1"/>
</dbReference>
<dbReference type="Pfam" id="PF02790">
    <property type="entry name" value="COX2_TM"/>
    <property type="match status" value="1"/>
</dbReference>
<dbReference type="PRINTS" id="PR01166">
    <property type="entry name" value="CYCOXIDASEII"/>
</dbReference>
<dbReference type="SUPFAM" id="SSF49503">
    <property type="entry name" value="Cupredoxins"/>
    <property type="match status" value="1"/>
</dbReference>
<dbReference type="SUPFAM" id="SSF81464">
    <property type="entry name" value="Cytochrome c oxidase subunit II-like, transmembrane region"/>
    <property type="match status" value="1"/>
</dbReference>
<dbReference type="PROSITE" id="PS00078">
    <property type="entry name" value="COX2"/>
    <property type="match status" value="1"/>
</dbReference>
<dbReference type="PROSITE" id="PS50857">
    <property type="entry name" value="COX2_CUA"/>
    <property type="match status" value="1"/>
</dbReference>
<dbReference type="PROSITE" id="PS50999">
    <property type="entry name" value="COX2_TM"/>
    <property type="match status" value="1"/>
</dbReference>
<organism>
    <name type="scientific">Tamias merriami</name>
    <name type="common">Merriam's chipmunk</name>
    <name type="synonym">Neotamias merriami</name>
    <dbReference type="NCBI Taxonomy" id="123787"/>
    <lineage>
        <taxon>Eukaryota</taxon>
        <taxon>Metazoa</taxon>
        <taxon>Chordata</taxon>
        <taxon>Craniata</taxon>
        <taxon>Vertebrata</taxon>
        <taxon>Euteleostomi</taxon>
        <taxon>Mammalia</taxon>
        <taxon>Eutheria</taxon>
        <taxon>Euarchontoglires</taxon>
        <taxon>Glires</taxon>
        <taxon>Rodentia</taxon>
        <taxon>Sciuromorpha</taxon>
        <taxon>Sciuridae</taxon>
        <taxon>Xerinae</taxon>
        <taxon>Marmotini</taxon>
        <taxon>Tamias</taxon>
    </lineage>
</organism>
<comment type="function">
    <text evidence="2">Component of the cytochrome c oxidase, the last enzyme in the mitochondrial electron transport chain which drives oxidative phosphorylation. The respiratory chain contains 3 multisubunit complexes succinate dehydrogenase (complex II, CII), ubiquinol-cytochrome c oxidoreductase (cytochrome b-c1 complex, complex III, CIII) and cytochrome c oxidase (complex IV, CIV), that cooperate to transfer electrons derived from NADH and succinate to molecular oxygen, creating an electrochemical gradient over the inner membrane that drives transmembrane transport and the ATP synthase. Cytochrome c oxidase is the component of the respiratory chain that catalyzes the reduction of oxygen to water. Electrons originating from reduced cytochrome c in the intermembrane space (IMS) are transferred via the dinuclear copper A center (CU(A)) of subunit 2 and heme A of subunit 1 to the active site in subunit 1, a binuclear center (BNC) formed by heme A3 and copper B (CU(B)). The BNC reduces molecular oxygen to 2 water molecules using 4 electrons from cytochrome c in the IMS and 4 protons from the mitochondrial matrix.</text>
</comment>
<comment type="catalytic activity">
    <reaction evidence="2">
        <text>4 Fe(II)-[cytochrome c] + O2 + 8 H(+)(in) = 4 Fe(III)-[cytochrome c] + 2 H2O + 4 H(+)(out)</text>
        <dbReference type="Rhea" id="RHEA:11436"/>
        <dbReference type="Rhea" id="RHEA-COMP:10350"/>
        <dbReference type="Rhea" id="RHEA-COMP:14399"/>
        <dbReference type="ChEBI" id="CHEBI:15377"/>
        <dbReference type="ChEBI" id="CHEBI:15378"/>
        <dbReference type="ChEBI" id="CHEBI:15379"/>
        <dbReference type="ChEBI" id="CHEBI:29033"/>
        <dbReference type="ChEBI" id="CHEBI:29034"/>
        <dbReference type="EC" id="7.1.1.9"/>
    </reaction>
    <physiologicalReaction direction="left-to-right" evidence="2">
        <dbReference type="Rhea" id="RHEA:11437"/>
    </physiologicalReaction>
</comment>
<comment type="cofactor">
    <cofactor evidence="3">
        <name>Cu cation</name>
        <dbReference type="ChEBI" id="CHEBI:23378"/>
    </cofactor>
    <text evidence="3">Binds a dinuclear copper A center per subunit.</text>
</comment>
<comment type="subunit">
    <text evidence="1 3">Component of the cytochrome c oxidase (complex IV, CIV), a multisubunit enzyme composed of 14 subunits. The complex is composed of a catalytic core of 3 subunits MT-CO1, MT-CO2 and MT-CO3, encoded in the mitochondrial DNA, and 11 supernumerary subunits COX4I, COX5A, COX5B, COX6A, COX6B, COX6C, COX7A, COX7B, COX7C, COX8 and NDUFA4, which are encoded in the nuclear genome. The complex exists as a monomer or a dimer and forms supercomplexes (SCs) in the inner mitochondrial membrane with NADH-ubiquinone oxidoreductase (complex I, CI) and ubiquinol-cytochrome c oxidoreductase (cytochrome b-c1 complex, complex III, CIII), resulting in different assemblies (supercomplex SCI(1)III(2)IV(1) and megacomplex MCI(2)III(2)IV(2)) (By similarity). Found in a complex with TMEM177, COA6, COX18, COX20, SCO1 and SCO2. Interacts with TMEM177 in a COX20-dependent manner. Interacts with COX20. Interacts with COX16 (By similarity).</text>
</comment>
<comment type="subcellular location">
    <subcellularLocation>
        <location evidence="3">Mitochondrion inner membrane</location>
        <topology evidence="3">Multi-pass membrane protein</topology>
    </subcellularLocation>
</comment>
<comment type="similarity">
    <text evidence="4">Belongs to the cytochrome c oxidase subunit 2 family.</text>
</comment>
<evidence type="ECO:0000250" key="1">
    <source>
        <dbReference type="UniProtKB" id="P00403"/>
    </source>
</evidence>
<evidence type="ECO:0000250" key="2">
    <source>
        <dbReference type="UniProtKB" id="P00410"/>
    </source>
</evidence>
<evidence type="ECO:0000250" key="3">
    <source>
        <dbReference type="UniProtKB" id="P68530"/>
    </source>
</evidence>
<evidence type="ECO:0000305" key="4"/>
<protein>
    <recommendedName>
        <fullName>Cytochrome c oxidase subunit 2</fullName>
        <ecNumber>7.1.1.9</ecNumber>
    </recommendedName>
    <alternativeName>
        <fullName>Cytochrome c oxidase polypeptide II</fullName>
    </alternativeName>
</protein>
<gene>
    <name type="primary">MT-CO2</name>
    <name type="synonym">COII</name>
    <name type="synonym">COX2</name>
    <name type="synonym">COXII</name>
    <name type="synonym">MTCO2</name>
</gene>
<feature type="chain" id="PRO_0000257856" description="Cytochrome c oxidase subunit 2">
    <location>
        <begin position="1"/>
        <end position="227"/>
    </location>
</feature>
<feature type="topological domain" description="Mitochondrial intermembrane" evidence="3">
    <location>
        <begin position="1"/>
        <end position="14"/>
    </location>
</feature>
<feature type="transmembrane region" description="Helical; Name=I" evidence="3">
    <location>
        <begin position="15"/>
        <end position="45"/>
    </location>
</feature>
<feature type="topological domain" description="Mitochondrial matrix" evidence="3">
    <location>
        <begin position="46"/>
        <end position="59"/>
    </location>
</feature>
<feature type="transmembrane region" description="Helical; Name=II" evidence="3">
    <location>
        <begin position="60"/>
        <end position="87"/>
    </location>
</feature>
<feature type="topological domain" description="Mitochondrial intermembrane" evidence="3">
    <location>
        <begin position="88"/>
        <end position="227"/>
    </location>
</feature>
<feature type="binding site" evidence="3">
    <location>
        <position position="161"/>
    </location>
    <ligand>
        <name>Cu cation</name>
        <dbReference type="ChEBI" id="CHEBI:23378"/>
        <label>A1</label>
    </ligand>
</feature>
<feature type="binding site" evidence="3">
    <location>
        <position position="196"/>
    </location>
    <ligand>
        <name>Cu cation</name>
        <dbReference type="ChEBI" id="CHEBI:23378"/>
        <label>A1</label>
    </ligand>
</feature>
<feature type="binding site" evidence="3">
    <location>
        <position position="196"/>
    </location>
    <ligand>
        <name>Cu cation</name>
        <dbReference type="ChEBI" id="CHEBI:23378"/>
        <label>A2</label>
    </ligand>
</feature>
<feature type="binding site" evidence="3">
    <location>
        <position position="198"/>
    </location>
    <ligand>
        <name>Cu cation</name>
        <dbReference type="ChEBI" id="CHEBI:23378"/>
        <label>A2</label>
    </ligand>
</feature>
<feature type="binding site" evidence="3">
    <location>
        <position position="198"/>
    </location>
    <ligand>
        <name>Mg(2+)</name>
        <dbReference type="ChEBI" id="CHEBI:18420"/>
        <note>ligand shared with MT-CO1</note>
    </ligand>
</feature>
<feature type="binding site" evidence="3">
    <location>
        <position position="200"/>
    </location>
    <ligand>
        <name>Cu cation</name>
        <dbReference type="ChEBI" id="CHEBI:23378"/>
        <label>A1</label>
    </ligand>
</feature>
<feature type="binding site" evidence="3">
    <location>
        <position position="200"/>
    </location>
    <ligand>
        <name>Cu cation</name>
        <dbReference type="ChEBI" id="CHEBI:23378"/>
        <label>A2</label>
    </ligand>
</feature>
<feature type="binding site" evidence="3">
    <location>
        <position position="204"/>
    </location>
    <ligand>
        <name>Cu cation</name>
        <dbReference type="ChEBI" id="CHEBI:23378"/>
        <label>A2</label>
    </ligand>
</feature>
<feature type="binding site" evidence="3">
    <location>
        <position position="207"/>
    </location>
    <ligand>
        <name>Cu cation</name>
        <dbReference type="ChEBI" id="CHEBI:23378"/>
        <label>A1</label>
    </ligand>
</feature>